<gene>
    <name evidence="1" type="primary">mnmA</name>
    <name type="synonym">trmU</name>
    <name type="ordered locus">SAS1557</name>
</gene>
<sequence>MSNKDIRVVVGMSGGVDSSVTAHVLKEQGYDVIGIFMKNWDDTDENGVCTATEDYNDVIEVCNQIGIPYYAVNFEKEYWDKVFTYFLDEYKKGRTPNPDVMCNKEIKFKAFLDHAMNLGADYVATGHYARIHRHEDGHVEMLRGVDNNKDQTYFLNQLSQQQLSKVMFPIGDIEKIEVRRIAEEQGLVTAKKKDSTGICFIGEKNFKTFLSQYLPAQPGDMITLDGKKMGKHSGLMYYTIGQRHGLGIGGDGDPWFVVGKNLKDNVLYVEQGFHHDALYSDYLIASDYSFVNPEDNDLDQGFECTAKFRYRQKDTKVFVKRENDHALRVTFAEPVRAITPGQAVVFYQGDVCLGGATIDDVFKNEGQLNYVV</sequence>
<proteinExistence type="inferred from homology"/>
<protein>
    <recommendedName>
        <fullName evidence="1">tRNA-specific 2-thiouridylase MnmA</fullName>
        <ecNumber evidence="1">2.8.1.13</ecNumber>
    </recommendedName>
</protein>
<keyword id="KW-0067">ATP-binding</keyword>
<keyword id="KW-0963">Cytoplasm</keyword>
<keyword id="KW-1015">Disulfide bond</keyword>
<keyword id="KW-0547">Nucleotide-binding</keyword>
<keyword id="KW-0694">RNA-binding</keyword>
<keyword id="KW-0808">Transferase</keyword>
<keyword id="KW-0819">tRNA processing</keyword>
<keyword id="KW-0820">tRNA-binding</keyword>
<accession>Q6G8U8</accession>
<organism>
    <name type="scientific">Staphylococcus aureus (strain MSSA476)</name>
    <dbReference type="NCBI Taxonomy" id="282459"/>
    <lineage>
        <taxon>Bacteria</taxon>
        <taxon>Bacillati</taxon>
        <taxon>Bacillota</taxon>
        <taxon>Bacilli</taxon>
        <taxon>Bacillales</taxon>
        <taxon>Staphylococcaceae</taxon>
        <taxon>Staphylococcus</taxon>
    </lineage>
</organism>
<comment type="function">
    <text evidence="1">Catalyzes the 2-thiolation of uridine at the wobble position (U34) of tRNA, leading to the formation of s(2)U34.</text>
</comment>
<comment type="catalytic activity">
    <reaction evidence="1">
        <text>S-sulfanyl-L-cysteinyl-[protein] + uridine(34) in tRNA + AH2 + ATP = 2-thiouridine(34) in tRNA + L-cysteinyl-[protein] + A + AMP + diphosphate + H(+)</text>
        <dbReference type="Rhea" id="RHEA:47032"/>
        <dbReference type="Rhea" id="RHEA-COMP:10131"/>
        <dbReference type="Rhea" id="RHEA-COMP:11726"/>
        <dbReference type="Rhea" id="RHEA-COMP:11727"/>
        <dbReference type="Rhea" id="RHEA-COMP:11728"/>
        <dbReference type="ChEBI" id="CHEBI:13193"/>
        <dbReference type="ChEBI" id="CHEBI:15378"/>
        <dbReference type="ChEBI" id="CHEBI:17499"/>
        <dbReference type="ChEBI" id="CHEBI:29950"/>
        <dbReference type="ChEBI" id="CHEBI:30616"/>
        <dbReference type="ChEBI" id="CHEBI:33019"/>
        <dbReference type="ChEBI" id="CHEBI:61963"/>
        <dbReference type="ChEBI" id="CHEBI:65315"/>
        <dbReference type="ChEBI" id="CHEBI:87170"/>
        <dbReference type="ChEBI" id="CHEBI:456215"/>
        <dbReference type="EC" id="2.8.1.13"/>
    </reaction>
</comment>
<comment type="subcellular location">
    <subcellularLocation>
        <location evidence="1">Cytoplasm</location>
    </subcellularLocation>
</comment>
<comment type="similarity">
    <text evidence="1">Belongs to the MnmA/TRMU family.</text>
</comment>
<name>MNMA_STAAS</name>
<reference key="1">
    <citation type="journal article" date="2004" name="Proc. Natl. Acad. Sci. U.S.A.">
        <title>Complete genomes of two clinical Staphylococcus aureus strains: evidence for the rapid evolution of virulence and drug resistance.</title>
        <authorList>
            <person name="Holden M.T.G."/>
            <person name="Feil E.J."/>
            <person name="Lindsay J.A."/>
            <person name="Peacock S.J."/>
            <person name="Day N.P.J."/>
            <person name="Enright M.C."/>
            <person name="Foster T.J."/>
            <person name="Moore C.E."/>
            <person name="Hurst L."/>
            <person name="Atkin R."/>
            <person name="Barron A."/>
            <person name="Bason N."/>
            <person name="Bentley S.D."/>
            <person name="Chillingworth C."/>
            <person name="Chillingworth T."/>
            <person name="Churcher C."/>
            <person name="Clark L."/>
            <person name="Corton C."/>
            <person name="Cronin A."/>
            <person name="Doggett J."/>
            <person name="Dowd L."/>
            <person name="Feltwell T."/>
            <person name="Hance Z."/>
            <person name="Harris B."/>
            <person name="Hauser H."/>
            <person name="Holroyd S."/>
            <person name="Jagels K."/>
            <person name="James K.D."/>
            <person name="Lennard N."/>
            <person name="Line A."/>
            <person name="Mayes R."/>
            <person name="Moule S."/>
            <person name="Mungall K."/>
            <person name="Ormond D."/>
            <person name="Quail M.A."/>
            <person name="Rabbinowitsch E."/>
            <person name="Rutherford K.M."/>
            <person name="Sanders M."/>
            <person name="Sharp S."/>
            <person name="Simmonds M."/>
            <person name="Stevens K."/>
            <person name="Whitehead S."/>
            <person name="Barrell B.G."/>
            <person name="Spratt B.G."/>
            <person name="Parkhill J."/>
        </authorList>
    </citation>
    <scope>NUCLEOTIDE SEQUENCE [LARGE SCALE GENOMIC DNA]</scope>
    <source>
        <strain>MSSA476</strain>
    </source>
</reference>
<feature type="chain" id="PRO_0000121677" description="tRNA-specific 2-thiouridylase MnmA">
    <location>
        <begin position="1"/>
        <end position="372"/>
    </location>
</feature>
<feature type="region of interest" description="Interaction with target base in tRNA" evidence="1">
    <location>
        <begin position="97"/>
        <end position="99"/>
    </location>
</feature>
<feature type="region of interest" description="Interaction with tRNA" evidence="1">
    <location>
        <begin position="149"/>
        <end position="151"/>
    </location>
</feature>
<feature type="region of interest" description="Interaction with tRNA" evidence="1">
    <location>
        <begin position="309"/>
        <end position="310"/>
    </location>
</feature>
<feature type="active site" description="Nucleophile" evidence="1">
    <location>
        <position position="102"/>
    </location>
</feature>
<feature type="active site" description="Cysteine persulfide intermediate" evidence="1">
    <location>
        <position position="199"/>
    </location>
</feature>
<feature type="binding site" evidence="1">
    <location>
        <begin position="11"/>
        <end position="18"/>
    </location>
    <ligand>
        <name>ATP</name>
        <dbReference type="ChEBI" id="CHEBI:30616"/>
    </ligand>
</feature>
<feature type="binding site" evidence="1">
    <location>
        <position position="37"/>
    </location>
    <ligand>
        <name>ATP</name>
        <dbReference type="ChEBI" id="CHEBI:30616"/>
    </ligand>
</feature>
<feature type="binding site" evidence="1">
    <location>
        <position position="126"/>
    </location>
    <ligand>
        <name>ATP</name>
        <dbReference type="ChEBI" id="CHEBI:30616"/>
    </ligand>
</feature>
<feature type="site" description="Interaction with tRNA" evidence="1">
    <location>
        <position position="127"/>
    </location>
</feature>
<feature type="site" description="Interaction with tRNA" evidence="1">
    <location>
        <position position="342"/>
    </location>
</feature>
<feature type="disulfide bond" description="Alternate" evidence="1">
    <location>
        <begin position="102"/>
        <end position="199"/>
    </location>
</feature>
<evidence type="ECO:0000255" key="1">
    <source>
        <dbReference type="HAMAP-Rule" id="MF_00144"/>
    </source>
</evidence>
<dbReference type="EC" id="2.8.1.13" evidence="1"/>
<dbReference type="EMBL" id="BX571857">
    <property type="protein sequence ID" value="CAG43358.1"/>
    <property type="molecule type" value="Genomic_DNA"/>
</dbReference>
<dbReference type="RefSeq" id="WP_000066094.1">
    <property type="nucleotide sequence ID" value="NC_002953.3"/>
</dbReference>
<dbReference type="SMR" id="Q6G8U8"/>
<dbReference type="KEGG" id="sas:SAS1557"/>
<dbReference type="HOGENOM" id="CLU_035188_1_0_9"/>
<dbReference type="GO" id="GO:0005737">
    <property type="term" value="C:cytoplasm"/>
    <property type="evidence" value="ECO:0007669"/>
    <property type="project" value="UniProtKB-SubCell"/>
</dbReference>
<dbReference type="GO" id="GO:0005524">
    <property type="term" value="F:ATP binding"/>
    <property type="evidence" value="ECO:0007669"/>
    <property type="project" value="UniProtKB-KW"/>
</dbReference>
<dbReference type="GO" id="GO:0000049">
    <property type="term" value="F:tRNA binding"/>
    <property type="evidence" value="ECO:0007669"/>
    <property type="project" value="UniProtKB-KW"/>
</dbReference>
<dbReference type="GO" id="GO:0103016">
    <property type="term" value="F:tRNA-uridine 2-sulfurtransferase activity"/>
    <property type="evidence" value="ECO:0007669"/>
    <property type="project" value="UniProtKB-EC"/>
</dbReference>
<dbReference type="GO" id="GO:0002143">
    <property type="term" value="P:tRNA wobble position uridine thiolation"/>
    <property type="evidence" value="ECO:0007669"/>
    <property type="project" value="TreeGrafter"/>
</dbReference>
<dbReference type="CDD" id="cd01998">
    <property type="entry name" value="MnmA_TRMU-like"/>
    <property type="match status" value="1"/>
</dbReference>
<dbReference type="FunFam" id="2.30.30.280:FF:000001">
    <property type="entry name" value="tRNA-specific 2-thiouridylase MnmA"/>
    <property type="match status" value="1"/>
</dbReference>
<dbReference type="FunFam" id="2.40.30.10:FF:000023">
    <property type="entry name" value="tRNA-specific 2-thiouridylase MnmA"/>
    <property type="match status" value="1"/>
</dbReference>
<dbReference type="FunFam" id="3.40.50.620:FF:000004">
    <property type="entry name" value="tRNA-specific 2-thiouridylase MnmA"/>
    <property type="match status" value="1"/>
</dbReference>
<dbReference type="Gene3D" id="2.30.30.280">
    <property type="entry name" value="Adenine nucleotide alpha hydrolases-like domains"/>
    <property type="match status" value="1"/>
</dbReference>
<dbReference type="Gene3D" id="3.40.50.620">
    <property type="entry name" value="HUPs"/>
    <property type="match status" value="1"/>
</dbReference>
<dbReference type="Gene3D" id="2.40.30.10">
    <property type="entry name" value="Translation factors"/>
    <property type="match status" value="1"/>
</dbReference>
<dbReference type="HAMAP" id="MF_00144">
    <property type="entry name" value="tRNA_thiouridyl_MnmA"/>
    <property type="match status" value="1"/>
</dbReference>
<dbReference type="InterPro" id="IPR004506">
    <property type="entry name" value="MnmA-like"/>
</dbReference>
<dbReference type="InterPro" id="IPR046885">
    <property type="entry name" value="MnmA-like_C"/>
</dbReference>
<dbReference type="InterPro" id="IPR046884">
    <property type="entry name" value="MnmA-like_central"/>
</dbReference>
<dbReference type="InterPro" id="IPR023382">
    <property type="entry name" value="MnmA-like_central_sf"/>
</dbReference>
<dbReference type="InterPro" id="IPR014729">
    <property type="entry name" value="Rossmann-like_a/b/a_fold"/>
</dbReference>
<dbReference type="NCBIfam" id="NF001138">
    <property type="entry name" value="PRK00143.1"/>
    <property type="match status" value="1"/>
</dbReference>
<dbReference type="NCBIfam" id="TIGR00420">
    <property type="entry name" value="trmU"/>
    <property type="match status" value="1"/>
</dbReference>
<dbReference type="PANTHER" id="PTHR11933:SF5">
    <property type="entry name" value="MITOCHONDRIAL TRNA-SPECIFIC 2-THIOURIDYLASE 1"/>
    <property type="match status" value="1"/>
</dbReference>
<dbReference type="PANTHER" id="PTHR11933">
    <property type="entry name" value="TRNA 5-METHYLAMINOMETHYL-2-THIOURIDYLATE -METHYLTRANSFERASE"/>
    <property type="match status" value="1"/>
</dbReference>
<dbReference type="Pfam" id="PF03054">
    <property type="entry name" value="tRNA_Me_trans"/>
    <property type="match status" value="1"/>
</dbReference>
<dbReference type="Pfam" id="PF20258">
    <property type="entry name" value="tRNA_Me_trans_C"/>
    <property type="match status" value="1"/>
</dbReference>
<dbReference type="Pfam" id="PF20259">
    <property type="entry name" value="tRNA_Me_trans_M"/>
    <property type="match status" value="1"/>
</dbReference>
<dbReference type="SUPFAM" id="SSF52402">
    <property type="entry name" value="Adenine nucleotide alpha hydrolases-like"/>
    <property type="match status" value="1"/>
</dbReference>